<reference key="1">
    <citation type="journal article" date="2000" name="J. Bacteriol.">
        <title>Type IV pilus genes pilA and pilC of Pseudomonas stutzeri are required for natural genetic transformation, and pilA can be replaced by corresponding genes from nontransformable species.</title>
        <authorList>
            <person name="Graupner S."/>
            <person name="Frey V."/>
            <person name="Hashemi R."/>
            <person name="Lorenz M.G."/>
            <person name="Brandes G."/>
            <person name="Wackernagel W."/>
        </authorList>
    </citation>
    <scope>NUCLEOTIDE SEQUENCE [GENOMIC DNA]</scope>
    <source>
        <strain>DSM 10701 / IAM 15110 / JCM 21571 / JM300</strain>
    </source>
</reference>
<evidence type="ECO:0000255" key="1">
    <source>
        <dbReference type="HAMAP-Rule" id="MF_00376"/>
    </source>
</evidence>
<evidence type="ECO:0000305" key="2"/>
<accession>Q9ZEL7</accession>
<dbReference type="EC" id="2.7.1.24" evidence="1"/>
<dbReference type="EMBL" id="AJ132364">
    <property type="protein sequence ID" value="CAA10648.1"/>
    <property type="molecule type" value="Genomic_DNA"/>
</dbReference>
<dbReference type="SMR" id="Q9ZEL7"/>
<dbReference type="eggNOG" id="COG0237">
    <property type="taxonomic scope" value="Bacteria"/>
</dbReference>
<dbReference type="UniPathway" id="UPA00241">
    <property type="reaction ID" value="UER00356"/>
</dbReference>
<dbReference type="GO" id="GO:0005737">
    <property type="term" value="C:cytoplasm"/>
    <property type="evidence" value="ECO:0007669"/>
    <property type="project" value="UniProtKB-SubCell"/>
</dbReference>
<dbReference type="GO" id="GO:0005524">
    <property type="term" value="F:ATP binding"/>
    <property type="evidence" value="ECO:0007669"/>
    <property type="project" value="UniProtKB-UniRule"/>
</dbReference>
<dbReference type="GO" id="GO:0004140">
    <property type="term" value="F:dephospho-CoA kinase activity"/>
    <property type="evidence" value="ECO:0007669"/>
    <property type="project" value="UniProtKB-UniRule"/>
</dbReference>
<dbReference type="GO" id="GO:0015937">
    <property type="term" value="P:coenzyme A biosynthetic process"/>
    <property type="evidence" value="ECO:0007669"/>
    <property type="project" value="UniProtKB-UniRule"/>
</dbReference>
<dbReference type="CDD" id="cd02022">
    <property type="entry name" value="DPCK"/>
    <property type="match status" value="1"/>
</dbReference>
<dbReference type="Gene3D" id="3.40.50.300">
    <property type="entry name" value="P-loop containing nucleotide triphosphate hydrolases"/>
    <property type="match status" value="1"/>
</dbReference>
<dbReference type="HAMAP" id="MF_00376">
    <property type="entry name" value="Dephospho_CoA_kinase"/>
    <property type="match status" value="1"/>
</dbReference>
<dbReference type="InterPro" id="IPR001977">
    <property type="entry name" value="Depp_CoAkinase"/>
</dbReference>
<dbReference type="InterPro" id="IPR027417">
    <property type="entry name" value="P-loop_NTPase"/>
</dbReference>
<dbReference type="NCBIfam" id="TIGR00152">
    <property type="entry name" value="dephospho-CoA kinase"/>
    <property type="match status" value="1"/>
</dbReference>
<dbReference type="PANTHER" id="PTHR10695:SF46">
    <property type="entry name" value="BIFUNCTIONAL COENZYME A SYNTHASE-RELATED"/>
    <property type="match status" value="1"/>
</dbReference>
<dbReference type="PANTHER" id="PTHR10695">
    <property type="entry name" value="DEPHOSPHO-COA KINASE-RELATED"/>
    <property type="match status" value="1"/>
</dbReference>
<dbReference type="Pfam" id="PF01121">
    <property type="entry name" value="CoaE"/>
    <property type="match status" value="1"/>
</dbReference>
<dbReference type="SUPFAM" id="SSF52540">
    <property type="entry name" value="P-loop containing nucleoside triphosphate hydrolases"/>
    <property type="match status" value="1"/>
</dbReference>
<dbReference type="PROSITE" id="PS51219">
    <property type="entry name" value="DPCK"/>
    <property type="match status" value="1"/>
</dbReference>
<sequence>MKPWILGLTGGIGSGKSAVVEQFGRLGVHWVDADHAARWVVEPGKPALARIAEHFGDGVLTPAGELDRAVLRARVFENAGERRWLEQLLHPLIRQEIAEHLSRAQSPYAILVSPLLIEAGQYRQADRVLVVDVPESLQLQRAMRRDQASEAQIRAILKAQASREERLRHADDVLVNDRDRAWLEAEVARLHDFYLTLRGGQP</sequence>
<keyword id="KW-0067">ATP-binding</keyword>
<keyword id="KW-0173">Coenzyme A biosynthesis</keyword>
<keyword id="KW-0963">Cytoplasm</keyword>
<keyword id="KW-0418">Kinase</keyword>
<keyword id="KW-0547">Nucleotide-binding</keyword>
<keyword id="KW-0808">Transferase</keyword>
<protein>
    <recommendedName>
        <fullName evidence="1">Dephospho-CoA kinase</fullName>
        <ecNumber evidence="1">2.7.1.24</ecNumber>
    </recommendedName>
    <alternativeName>
        <fullName evidence="1">Dephosphocoenzyme A kinase</fullName>
    </alternativeName>
</protein>
<feature type="chain" id="PRO_0000172985" description="Dephospho-CoA kinase">
    <location>
        <begin position="1"/>
        <end position="202"/>
    </location>
</feature>
<feature type="domain" description="DPCK" evidence="1">
    <location>
        <begin position="5"/>
        <end position="202"/>
    </location>
</feature>
<feature type="binding site" evidence="1">
    <location>
        <begin position="13"/>
        <end position="18"/>
    </location>
    <ligand>
        <name>ATP</name>
        <dbReference type="ChEBI" id="CHEBI:30616"/>
    </ligand>
</feature>
<proteinExistence type="inferred from homology"/>
<name>COAE_STUST</name>
<organism>
    <name type="scientific">Stutzerimonas stutzeri</name>
    <name type="common">Pseudomonas stutzeri</name>
    <dbReference type="NCBI Taxonomy" id="316"/>
    <lineage>
        <taxon>Bacteria</taxon>
        <taxon>Pseudomonadati</taxon>
        <taxon>Pseudomonadota</taxon>
        <taxon>Gammaproteobacteria</taxon>
        <taxon>Pseudomonadales</taxon>
        <taxon>Pseudomonadaceae</taxon>
        <taxon>Stutzerimonas</taxon>
    </lineage>
</organism>
<gene>
    <name evidence="1" type="primary">coaE</name>
</gene>
<comment type="function">
    <text evidence="1">Catalyzes the phosphorylation of the 3'-hydroxyl group of dephosphocoenzyme A to form coenzyme A.</text>
</comment>
<comment type="catalytic activity">
    <reaction evidence="1">
        <text>3'-dephospho-CoA + ATP = ADP + CoA + H(+)</text>
        <dbReference type="Rhea" id="RHEA:18245"/>
        <dbReference type="ChEBI" id="CHEBI:15378"/>
        <dbReference type="ChEBI" id="CHEBI:30616"/>
        <dbReference type="ChEBI" id="CHEBI:57287"/>
        <dbReference type="ChEBI" id="CHEBI:57328"/>
        <dbReference type="ChEBI" id="CHEBI:456216"/>
        <dbReference type="EC" id="2.7.1.24"/>
    </reaction>
</comment>
<comment type="pathway">
    <text evidence="1">Cofactor biosynthesis; coenzyme A biosynthesis; CoA from (R)-pantothenate: step 5/5.</text>
</comment>
<comment type="subcellular location">
    <subcellularLocation>
        <location evidence="1">Cytoplasm</location>
    </subcellularLocation>
</comment>
<comment type="similarity">
    <text evidence="1 2">Belongs to the CoaE family.</text>
</comment>